<feature type="chain" id="PRO_0000186318" description="Mitogen-activated protein kinase homolog MMK2">
    <location>
        <begin position="1"/>
        <end position="371"/>
    </location>
</feature>
<feature type="domain" description="Protein kinase" evidence="2">
    <location>
        <begin position="37"/>
        <end position="323"/>
    </location>
</feature>
<feature type="short sequence motif" description="TXY">
    <location>
        <begin position="195"/>
        <end position="197"/>
    </location>
</feature>
<feature type="active site" description="Proton acceptor" evidence="2 3">
    <location>
        <position position="163"/>
    </location>
</feature>
<feature type="binding site" evidence="2">
    <location>
        <begin position="43"/>
        <end position="51"/>
    </location>
    <ligand>
        <name>ATP</name>
        <dbReference type="ChEBI" id="CHEBI:30616"/>
    </ligand>
</feature>
<feature type="binding site" evidence="2">
    <location>
        <position position="66"/>
    </location>
    <ligand>
        <name>ATP</name>
        <dbReference type="ChEBI" id="CHEBI:30616"/>
    </ligand>
</feature>
<feature type="modified residue" description="Phosphothreonine" evidence="1">
    <location>
        <position position="195"/>
    </location>
</feature>
<feature type="modified residue" description="Phosphotyrosine" evidence="1">
    <location>
        <position position="197"/>
    </location>
</feature>
<proteinExistence type="evidence at transcript level"/>
<keyword id="KW-0067">ATP-binding</keyword>
<keyword id="KW-0418">Kinase</keyword>
<keyword id="KW-0547">Nucleotide-binding</keyword>
<keyword id="KW-0597">Phosphoprotein</keyword>
<keyword id="KW-0723">Serine/threonine-protein kinase</keyword>
<keyword id="KW-0808">Transferase</keyword>
<name>MMK2_MEDSA</name>
<reference key="1">
    <citation type="journal article" date="1995" name="Mol. Gen. Genet.">
        <title>MMK2, a novel alfalfa MAP kinase, specifically complements the yeast MPK1 function.</title>
        <authorList>
            <person name="Jonak C."/>
            <person name="Kiegerl S."/>
            <person name="Lloyd C."/>
            <person name="Chan J."/>
            <person name="Hirt H."/>
        </authorList>
    </citation>
    <scope>NUCLEOTIDE SEQUENCE [MRNA]</scope>
    <source>
        <tissue>Embryo</tissue>
    </source>
</reference>
<dbReference type="EC" id="2.7.11.24"/>
<dbReference type="EMBL" id="X82268">
    <property type="protein sequence ID" value="CAA57719.1"/>
    <property type="molecule type" value="mRNA"/>
</dbReference>
<dbReference type="PIR" id="S60121">
    <property type="entry name" value="S60121"/>
</dbReference>
<dbReference type="SMR" id="Q40353"/>
<dbReference type="BRENDA" id="2.7.11.24">
    <property type="organism ID" value="3078"/>
</dbReference>
<dbReference type="GO" id="GO:0005524">
    <property type="term" value="F:ATP binding"/>
    <property type="evidence" value="ECO:0007669"/>
    <property type="project" value="UniProtKB-KW"/>
</dbReference>
<dbReference type="GO" id="GO:0004707">
    <property type="term" value="F:MAP kinase activity"/>
    <property type="evidence" value="ECO:0007669"/>
    <property type="project" value="UniProtKB-EC"/>
</dbReference>
<dbReference type="GO" id="GO:0106310">
    <property type="term" value="F:protein serine kinase activity"/>
    <property type="evidence" value="ECO:0007669"/>
    <property type="project" value="RHEA"/>
</dbReference>
<dbReference type="CDD" id="cd07858">
    <property type="entry name" value="STKc_TEY_MAPK"/>
    <property type="match status" value="1"/>
</dbReference>
<dbReference type="FunFam" id="1.10.510.10:FF:000013">
    <property type="entry name" value="Mitogen-activated protein kinase"/>
    <property type="match status" value="1"/>
</dbReference>
<dbReference type="FunFam" id="3.30.200.20:FF:000046">
    <property type="entry name" value="Mitogen-activated protein kinase"/>
    <property type="match status" value="1"/>
</dbReference>
<dbReference type="Gene3D" id="3.30.200.20">
    <property type="entry name" value="Phosphorylase Kinase, domain 1"/>
    <property type="match status" value="1"/>
</dbReference>
<dbReference type="Gene3D" id="1.10.510.10">
    <property type="entry name" value="Transferase(Phosphotransferase) domain 1"/>
    <property type="match status" value="1"/>
</dbReference>
<dbReference type="InterPro" id="IPR011009">
    <property type="entry name" value="Kinase-like_dom_sf"/>
</dbReference>
<dbReference type="InterPro" id="IPR050117">
    <property type="entry name" value="MAP_kinase"/>
</dbReference>
<dbReference type="InterPro" id="IPR003527">
    <property type="entry name" value="MAP_kinase_CS"/>
</dbReference>
<dbReference type="InterPro" id="IPR000719">
    <property type="entry name" value="Prot_kinase_dom"/>
</dbReference>
<dbReference type="InterPro" id="IPR017441">
    <property type="entry name" value="Protein_kinase_ATP_BS"/>
</dbReference>
<dbReference type="InterPro" id="IPR008271">
    <property type="entry name" value="Ser/Thr_kinase_AS"/>
</dbReference>
<dbReference type="PANTHER" id="PTHR24055">
    <property type="entry name" value="MITOGEN-ACTIVATED PROTEIN KINASE"/>
    <property type="match status" value="1"/>
</dbReference>
<dbReference type="Pfam" id="PF00069">
    <property type="entry name" value="Pkinase"/>
    <property type="match status" value="1"/>
</dbReference>
<dbReference type="SMART" id="SM00220">
    <property type="entry name" value="S_TKc"/>
    <property type="match status" value="1"/>
</dbReference>
<dbReference type="SUPFAM" id="SSF56112">
    <property type="entry name" value="Protein kinase-like (PK-like)"/>
    <property type="match status" value="1"/>
</dbReference>
<dbReference type="PROSITE" id="PS01351">
    <property type="entry name" value="MAPK"/>
    <property type="match status" value="1"/>
</dbReference>
<dbReference type="PROSITE" id="PS00107">
    <property type="entry name" value="PROTEIN_KINASE_ATP"/>
    <property type="match status" value="1"/>
</dbReference>
<dbReference type="PROSITE" id="PS50011">
    <property type="entry name" value="PROTEIN_KINASE_DOM"/>
    <property type="match status" value="1"/>
</dbReference>
<dbReference type="PROSITE" id="PS00108">
    <property type="entry name" value="PROTEIN_KINASE_ST"/>
    <property type="match status" value="1"/>
</dbReference>
<sequence length="371" mass="42794">MSVESAENNIRGVPTHGGRYLQYNIYGNLFEVSRKYVPPIRSVGRGAYGIVCAAVNAETREEVAIKKIGNAFDNRIDAKRTLREIKLLRHMDHENVMSIKDIIRPPQKENFNHVYIVSELMDTDLHQIIRSNQPMTDDHCRYFVYQLLRGLKYVHSANVLHRDLKPSNLLLNANCDLKIGDFGLARTTSETDFMTEYVVTRWYRAPELLLNCSDYTAAIDIWSVGCILGEIVTRQPLFPGRDYVHQLRLVTELIGSPDDASLGFLRSENARRYVRQLPQYPKQNFSARFPNMSPGAVDLLEKMLIFDPSKRIKVDEALCHPYMAPLHDINEEPVCARPFSFDFEEPMFTEEDIKELIWKESVRFNPDPPIN</sequence>
<gene>
    <name type="primary">MMK2</name>
</gene>
<accession>Q40353</accession>
<comment type="catalytic activity">
    <reaction>
        <text>L-seryl-[protein] + ATP = O-phospho-L-seryl-[protein] + ADP + H(+)</text>
        <dbReference type="Rhea" id="RHEA:17989"/>
        <dbReference type="Rhea" id="RHEA-COMP:9863"/>
        <dbReference type="Rhea" id="RHEA-COMP:11604"/>
        <dbReference type="ChEBI" id="CHEBI:15378"/>
        <dbReference type="ChEBI" id="CHEBI:29999"/>
        <dbReference type="ChEBI" id="CHEBI:30616"/>
        <dbReference type="ChEBI" id="CHEBI:83421"/>
        <dbReference type="ChEBI" id="CHEBI:456216"/>
        <dbReference type="EC" id="2.7.11.24"/>
    </reaction>
</comment>
<comment type="catalytic activity">
    <reaction>
        <text>L-threonyl-[protein] + ATP = O-phospho-L-threonyl-[protein] + ADP + H(+)</text>
        <dbReference type="Rhea" id="RHEA:46608"/>
        <dbReference type="Rhea" id="RHEA-COMP:11060"/>
        <dbReference type="Rhea" id="RHEA-COMP:11605"/>
        <dbReference type="ChEBI" id="CHEBI:15378"/>
        <dbReference type="ChEBI" id="CHEBI:30013"/>
        <dbReference type="ChEBI" id="CHEBI:30616"/>
        <dbReference type="ChEBI" id="CHEBI:61977"/>
        <dbReference type="ChEBI" id="CHEBI:456216"/>
        <dbReference type="EC" id="2.7.11.24"/>
    </reaction>
</comment>
<comment type="cofactor">
    <cofactor evidence="1">
        <name>Mg(2+)</name>
        <dbReference type="ChEBI" id="CHEBI:18420"/>
    </cofactor>
</comment>
<comment type="activity regulation">
    <text evidence="1">Activated by tyrosine and threonine phosphorylation.</text>
</comment>
<comment type="domain">
    <text>The TXY motif contains the threonine and tyrosine residues whose phosphorylation activates the MAP kinases.</text>
</comment>
<comment type="PTM">
    <text evidence="1">Dually phosphorylated on Thr-195 and Tyr-197, which activates the enzyme (By similarity). Autophosphorylated.</text>
</comment>
<comment type="similarity">
    <text evidence="4">Belongs to the protein kinase superfamily. CMGC Ser/Thr protein kinase family. MAP kinase subfamily.</text>
</comment>
<protein>
    <recommendedName>
        <fullName>Mitogen-activated protein kinase homolog MMK2</fullName>
        <ecNumber>2.7.11.24</ecNumber>
    </recommendedName>
</protein>
<organism>
    <name type="scientific">Medicago sativa</name>
    <name type="common">Alfalfa</name>
    <dbReference type="NCBI Taxonomy" id="3879"/>
    <lineage>
        <taxon>Eukaryota</taxon>
        <taxon>Viridiplantae</taxon>
        <taxon>Streptophyta</taxon>
        <taxon>Embryophyta</taxon>
        <taxon>Tracheophyta</taxon>
        <taxon>Spermatophyta</taxon>
        <taxon>Magnoliopsida</taxon>
        <taxon>eudicotyledons</taxon>
        <taxon>Gunneridae</taxon>
        <taxon>Pentapetalae</taxon>
        <taxon>rosids</taxon>
        <taxon>fabids</taxon>
        <taxon>Fabales</taxon>
        <taxon>Fabaceae</taxon>
        <taxon>Papilionoideae</taxon>
        <taxon>50 kb inversion clade</taxon>
        <taxon>NPAAA clade</taxon>
        <taxon>Hologalegina</taxon>
        <taxon>IRL clade</taxon>
        <taxon>Trifolieae</taxon>
        <taxon>Medicago</taxon>
    </lineage>
</organism>
<evidence type="ECO:0000250" key="1"/>
<evidence type="ECO:0000255" key="2">
    <source>
        <dbReference type="PROSITE-ProRule" id="PRU00159"/>
    </source>
</evidence>
<evidence type="ECO:0000255" key="3">
    <source>
        <dbReference type="PROSITE-ProRule" id="PRU10027"/>
    </source>
</evidence>
<evidence type="ECO:0000305" key="4"/>